<evidence type="ECO:0000255" key="1">
    <source>
        <dbReference type="HAMAP-Rule" id="MF_00959"/>
    </source>
</evidence>
<name>RPOS_SALTI</name>
<organism>
    <name type="scientific">Salmonella typhi</name>
    <dbReference type="NCBI Taxonomy" id="90370"/>
    <lineage>
        <taxon>Bacteria</taxon>
        <taxon>Pseudomonadati</taxon>
        <taxon>Pseudomonadota</taxon>
        <taxon>Gammaproteobacteria</taxon>
        <taxon>Enterobacterales</taxon>
        <taxon>Enterobacteriaceae</taxon>
        <taxon>Salmonella</taxon>
    </lineage>
</organism>
<keyword id="KW-0963">Cytoplasm</keyword>
<keyword id="KW-0238">DNA-binding</keyword>
<keyword id="KW-0731">Sigma factor</keyword>
<keyword id="KW-0804">Transcription</keyword>
<keyword id="KW-0805">Transcription regulation</keyword>
<sequence>MSQNTLKVHDLNEDAEFDENGVEAFDEKALSEEEPSDNDLAEEELLSQGATQRVLDATQLYLGEIGYSPLLTAEEEVYFARRALRGDVASRRRMIESNLRLVVKIARRYGNRGLALLDLIEEGNLGLIRAVEKFDPERGFRFSTYATWWIRQTIERAIMNQTRTIRLPIHIVKELNVYLRTARELSHKLDHEPSAEEIAEQLDKPVDDVSRMLRLNERITSVDTPLGGDSEKALLDILADEKENGPEDTTQDDDMKQSIVKWLFELNAKQREVLARRFGLLGYEAATLEDVGREIGLTRERVRQIQVEGLRRLREILQTQGLNIEALFRE</sequence>
<gene>
    <name evidence="1" type="primary">rpoS</name>
    <name type="synonym">katF</name>
    <name type="ordered locus">STY3049</name>
    <name type="ordered locus">t2825</name>
</gene>
<reference key="1">
    <citation type="journal article" date="1995" name="FEMS Microbiol. Lett.">
        <title>The live oral typhoid vaccine Ty21a is a rpoS mutant and is susceptible to various environmental stresses.</title>
        <authorList>
            <person name="Robbe-Saule V."/>
            <person name="Coynault C."/>
            <person name="Norel F."/>
        </authorList>
    </citation>
    <scope>NUCLEOTIDE SEQUENCE [GENOMIC DNA]</scope>
    <source>
        <strain>Ty21a</strain>
    </source>
</reference>
<reference key="2">
    <citation type="journal article" date="1999" name="FEMS Microbiol. Lett.">
        <title>The rpoS mutant allele of Salmonella typhi Ty2 is identical to that of the live typhoid vaccine Ty21a.</title>
        <authorList>
            <person name="Robbe-Saule V."/>
            <person name="Norel F."/>
        </authorList>
    </citation>
    <scope>NUCLEOTIDE SEQUENCE [GENOMIC DNA]</scope>
    <source>
        <strain>ATCC 700931 / Ty2</strain>
    </source>
</reference>
<reference key="3">
    <citation type="journal article" date="2001" name="Nature">
        <title>Complete genome sequence of a multiple drug resistant Salmonella enterica serovar Typhi CT18.</title>
        <authorList>
            <person name="Parkhill J."/>
            <person name="Dougan G."/>
            <person name="James K.D."/>
            <person name="Thomson N.R."/>
            <person name="Pickard D."/>
            <person name="Wain J."/>
            <person name="Churcher C.M."/>
            <person name="Mungall K.L."/>
            <person name="Bentley S.D."/>
            <person name="Holden M.T.G."/>
            <person name="Sebaihia M."/>
            <person name="Baker S."/>
            <person name="Basham D."/>
            <person name="Brooks K."/>
            <person name="Chillingworth T."/>
            <person name="Connerton P."/>
            <person name="Cronin A."/>
            <person name="Davis P."/>
            <person name="Davies R.M."/>
            <person name="Dowd L."/>
            <person name="White N."/>
            <person name="Farrar J."/>
            <person name="Feltwell T."/>
            <person name="Hamlin N."/>
            <person name="Haque A."/>
            <person name="Hien T.T."/>
            <person name="Holroyd S."/>
            <person name="Jagels K."/>
            <person name="Krogh A."/>
            <person name="Larsen T.S."/>
            <person name="Leather S."/>
            <person name="Moule S."/>
            <person name="O'Gaora P."/>
            <person name="Parry C."/>
            <person name="Quail M.A."/>
            <person name="Rutherford K.M."/>
            <person name="Simmonds M."/>
            <person name="Skelton J."/>
            <person name="Stevens K."/>
            <person name="Whitehead S."/>
            <person name="Barrell B.G."/>
        </authorList>
    </citation>
    <scope>NUCLEOTIDE SEQUENCE [LARGE SCALE GENOMIC DNA]</scope>
    <source>
        <strain>CT18</strain>
    </source>
</reference>
<reference key="4">
    <citation type="journal article" date="2003" name="J. Bacteriol.">
        <title>Comparative genomics of Salmonella enterica serovar Typhi strains Ty2 and CT18.</title>
        <authorList>
            <person name="Deng W."/>
            <person name="Liou S.-R."/>
            <person name="Plunkett G. III"/>
            <person name="Mayhew G.F."/>
            <person name="Rose D.J."/>
            <person name="Burland V."/>
            <person name="Kodoyianni V."/>
            <person name="Schwartz D.C."/>
            <person name="Blattner F.R."/>
        </authorList>
    </citation>
    <scope>NUCLEOTIDE SEQUENCE [LARGE SCALE GENOMIC DNA]</scope>
    <source>
        <strain>ATCC 700931 / Ty2</strain>
    </source>
</reference>
<dbReference type="EMBL" id="X81641">
    <property type="protein sequence ID" value="CAA57298.1"/>
    <property type="molecule type" value="Genomic_DNA"/>
</dbReference>
<dbReference type="EMBL" id="Y17610">
    <property type="protein sequence ID" value="CAA76807.1"/>
    <property type="molecule type" value="Genomic_DNA"/>
</dbReference>
<dbReference type="EMBL" id="AL513382">
    <property type="protein sequence ID" value="CAD06030.1"/>
    <property type="molecule type" value="Genomic_DNA"/>
</dbReference>
<dbReference type="EMBL" id="AE014613">
    <property type="protein sequence ID" value="AAO70382.1"/>
    <property type="molecule type" value="Genomic_DNA"/>
</dbReference>
<dbReference type="PIR" id="AG0855">
    <property type="entry name" value="AG0855"/>
</dbReference>
<dbReference type="PIR" id="S58446">
    <property type="entry name" value="S58446"/>
</dbReference>
<dbReference type="RefSeq" id="NP_457313.1">
    <property type="nucleotide sequence ID" value="NC_003198.1"/>
</dbReference>
<dbReference type="RefSeq" id="WP_000081498.1">
    <property type="nucleotide sequence ID" value="NZ_WSUR01000005.1"/>
</dbReference>
<dbReference type="SMR" id="P0A2E6"/>
<dbReference type="IntAct" id="P0A2E6">
    <property type="interactions" value="1"/>
</dbReference>
<dbReference type="STRING" id="220341.gene:17586940"/>
<dbReference type="GeneID" id="89547518"/>
<dbReference type="KEGG" id="stt:t2825"/>
<dbReference type="KEGG" id="sty:STY3049"/>
<dbReference type="PATRIC" id="fig|220341.7.peg.3101"/>
<dbReference type="eggNOG" id="COG0568">
    <property type="taxonomic scope" value="Bacteria"/>
</dbReference>
<dbReference type="HOGENOM" id="CLU_014793_3_5_6"/>
<dbReference type="OMA" id="RVQREFN"/>
<dbReference type="OrthoDB" id="9809557at2"/>
<dbReference type="Proteomes" id="UP000000541">
    <property type="component" value="Chromosome"/>
</dbReference>
<dbReference type="Proteomes" id="UP000002670">
    <property type="component" value="Chromosome"/>
</dbReference>
<dbReference type="GO" id="GO:0005737">
    <property type="term" value="C:cytoplasm"/>
    <property type="evidence" value="ECO:0007669"/>
    <property type="project" value="UniProtKB-SubCell"/>
</dbReference>
<dbReference type="GO" id="GO:0003677">
    <property type="term" value="F:DNA binding"/>
    <property type="evidence" value="ECO:0007669"/>
    <property type="project" value="UniProtKB-UniRule"/>
</dbReference>
<dbReference type="GO" id="GO:0016987">
    <property type="term" value="F:sigma factor activity"/>
    <property type="evidence" value="ECO:0007669"/>
    <property type="project" value="UniProtKB-UniRule"/>
</dbReference>
<dbReference type="GO" id="GO:0006352">
    <property type="term" value="P:DNA-templated transcription initiation"/>
    <property type="evidence" value="ECO:0007669"/>
    <property type="project" value="UniProtKB-UniRule"/>
</dbReference>
<dbReference type="CDD" id="cd06171">
    <property type="entry name" value="Sigma70_r4"/>
    <property type="match status" value="1"/>
</dbReference>
<dbReference type="FunFam" id="1.10.10.10:FF:000044">
    <property type="entry name" value="RNA polymerase sigma factor RpoS"/>
    <property type="match status" value="1"/>
</dbReference>
<dbReference type="FunFam" id="1.10.10.10:FF:000046">
    <property type="entry name" value="RNA polymerase sigma factor RpoS"/>
    <property type="match status" value="1"/>
</dbReference>
<dbReference type="FunFam" id="1.10.601.10:FF:000001">
    <property type="entry name" value="RNA polymerase sigma factor SigA"/>
    <property type="match status" value="1"/>
</dbReference>
<dbReference type="Gene3D" id="1.10.601.10">
    <property type="entry name" value="RNA Polymerase Primary Sigma Factor"/>
    <property type="match status" value="1"/>
</dbReference>
<dbReference type="Gene3D" id="1.10.10.10">
    <property type="entry name" value="Winged helix-like DNA-binding domain superfamily/Winged helix DNA-binding domain"/>
    <property type="match status" value="2"/>
</dbReference>
<dbReference type="HAMAP" id="MF_00959">
    <property type="entry name" value="Sigma70_RpoS"/>
    <property type="match status" value="1"/>
</dbReference>
<dbReference type="InterPro" id="IPR014284">
    <property type="entry name" value="RNA_pol_sigma-70_dom"/>
</dbReference>
<dbReference type="InterPro" id="IPR000943">
    <property type="entry name" value="RNA_pol_sigma70"/>
</dbReference>
<dbReference type="InterPro" id="IPR009042">
    <property type="entry name" value="RNA_pol_sigma70_r1_2"/>
</dbReference>
<dbReference type="InterPro" id="IPR007627">
    <property type="entry name" value="RNA_pol_sigma70_r2"/>
</dbReference>
<dbReference type="InterPro" id="IPR007624">
    <property type="entry name" value="RNA_pol_sigma70_r3"/>
</dbReference>
<dbReference type="InterPro" id="IPR007630">
    <property type="entry name" value="RNA_pol_sigma70_r4"/>
</dbReference>
<dbReference type="InterPro" id="IPR013325">
    <property type="entry name" value="RNA_pol_sigma_r2"/>
</dbReference>
<dbReference type="InterPro" id="IPR013324">
    <property type="entry name" value="RNA_pol_sigma_r3/r4-like"/>
</dbReference>
<dbReference type="InterPro" id="IPR012761">
    <property type="entry name" value="RNA_pol_sigma_RpoS"/>
</dbReference>
<dbReference type="InterPro" id="IPR050239">
    <property type="entry name" value="Sigma-70_RNA_pol_init_factors"/>
</dbReference>
<dbReference type="InterPro" id="IPR036388">
    <property type="entry name" value="WH-like_DNA-bd_sf"/>
</dbReference>
<dbReference type="NCBIfam" id="NF004207">
    <property type="entry name" value="PRK05657.1"/>
    <property type="match status" value="1"/>
</dbReference>
<dbReference type="NCBIfam" id="TIGR02394">
    <property type="entry name" value="rpoS_proteo"/>
    <property type="match status" value="1"/>
</dbReference>
<dbReference type="NCBIfam" id="TIGR02937">
    <property type="entry name" value="sigma70-ECF"/>
    <property type="match status" value="1"/>
</dbReference>
<dbReference type="PANTHER" id="PTHR30603">
    <property type="entry name" value="RNA POLYMERASE SIGMA FACTOR RPO"/>
    <property type="match status" value="1"/>
</dbReference>
<dbReference type="PANTHER" id="PTHR30603:SF67">
    <property type="entry name" value="RNA POLYMERASE SIGMA FACTOR RPOS"/>
    <property type="match status" value="1"/>
</dbReference>
<dbReference type="Pfam" id="PF00140">
    <property type="entry name" value="Sigma70_r1_2"/>
    <property type="match status" value="1"/>
</dbReference>
<dbReference type="Pfam" id="PF04542">
    <property type="entry name" value="Sigma70_r2"/>
    <property type="match status" value="1"/>
</dbReference>
<dbReference type="Pfam" id="PF04539">
    <property type="entry name" value="Sigma70_r3"/>
    <property type="match status" value="1"/>
</dbReference>
<dbReference type="Pfam" id="PF04545">
    <property type="entry name" value="Sigma70_r4"/>
    <property type="match status" value="1"/>
</dbReference>
<dbReference type="PRINTS" id="PR00046">
    <property type="entry name" value="SIGMA70FCT"/>
</dbReference>
<dbReference type="SUPFAM" id="SSF88946">
    <property type="entry name" value="Sigma2 domain of RNA polymerase sigma factors"/>
    <property type="match status" value="1"/>
</dbReference>
<dbReference type="SUPFAM" id="SSF88659">
    <property type="entry name" value="Sigma3 and sigma4 domains of RNA polymerase sigma factors"/>
    <property type="match status" value="2"/>
</dbReference>
<dbReference type="PROSITE" id="PS00715">
    <property type="entry name" value="SIGMA70_1"/>
    <property type="match status" value="1"/>
</dbReference>
<dbReference type="PROSITE" id="PS00716">
    <property type="entry name" value="SIGMA70_2"/>
    <property type="match status" value="1"/>
</dbReference>
<proteinExistence type="inferred from homology"/>
<feature type="chain" id="PRO_0000093972" description="RNA polymerase sigma factor RpoS">
    <location>
        <begin position="1"/>
        <end position="330"/>
    </location>
</feature>
<feature type="DNA-binding region" description="H-T-H motif" evidence="1">
    <location>
        <begin position="288"/>
        <end position="307"/>
    </location>
</feature>
<feature type="region of interest" description="Sigma-70 factor domain-1" evidence="1">
    <location>
        <begin position="56"/>
        <end position="89"/>
    </location>
</feature>
<feature type="region of interest" description="Sigma-70 factor domain-2" evidence="1">
    <location>
        <begin position="94"/>
        <end position="164"/>
    </location>
</feature>
<feature type="region of interest" description="Sigma-70 factor domain-3" evidence="1">
    <location>
        <begin position="174"/>
        <end position="249"/>
    </location>
</feature>
<feature type="region of interest" description="Sigma-70 factor domain-4" evidence="1">
    <location>
        <begin position="262"/>
        <end position="315"/>
    </location>
</feature>
<feature type="short sequence motif" description="Interaction with polymerase core subunit RpoC">
    <location>
        <begin position="118"/>
        <end position="121"/>
    </location>
</feature>
<feature type="sequence variant" description="In strain: Ty2 and Ty21a.">
    <original>RLREILQTQGLNIEALFRE</original>
    <variation>PSARNSADAGAEYRSAVPRVSTLVKKRPVDRLAFFLPFVFCQQRRDTRHHWRVINIFLRHAKRLWIVFAAGTA</variation>
    <location>
        <begin position="312"/>
        <end position="330"/>
    </location>
</feature>
<accession>P0A2E6</accession>
<accession>P37400</accession>
<accession>P39699</accession>
<accession>Q56132</accession>
<accession>Q93V26</accession>
<accession>Q9RN87</accession>
<accession>Q9RN91</accession>
<accession>Q9RN92</accession>
<accession>Q9RN93</accession>
<comment type="function">
    <text evidence="1">Sigma factors are initiation factors that promote the attachment of RNA polymerase to specific initiation sites and are then released. This sigma factor is the master transcriptional regulator of the stationary phase and the general stress response.</text>
</comment>
<comment type="subunit">
    <text evidence="1">Interacts with the RNA polymerase core enzyme.</text>
</comment>
<comment type="subcellular location">
    <subcellularLocation>
        <location evidence="1">Cytoplasm</location>
    </subcellularLocation>
</comment>
<comment type="similarity">
    <text evidence="1">Belongs to the sigma-70 factor family. RpoS subfamily.</text>
</comment>
<protein>
    <recommendedName>
        <fullName evidence="1">RNA polymerase sigma factor RpoS</fullName>
    </recommendedName>
    <alternativeName>
        <fullName evidence="1">Sigma S</fullName>
    </alternativeName>
    <alternativeName>
        <fullName evidence="1">Sigma-38</fullName>
    </alternativeName>
</protein>